<feature type="chain" id="PRO_0000325402" description="3-phosphoshikimate 1-carboxyvinyltransferase">
    <location>
        <begin position="1"/>
        <end position="433"/>
    </location>
</feature>
<feature type="active site" description="Proton acceptor" evidence="1">
    <location>
        <position position="315"/>
    </location>
</feature>
<feature type="binding site" evidence="1">
    <location>
        <position position="20"/>
    </location>
    <ligand>
        <name>3-phosphoshikimate</name>
        <dbReference type="ChEBI" id="CHEBI:145989"/>
    </ligand>
</feature>
<feature type="binding site" evidence="1">
    <location>
        <position position="20"/>
    </location>
    <ligand>
        <name>phosphoenolpyruvate</name>
        <dbReference type="ChEBI" id="CHEBI:58702"/>
    </ligand>
</feature>
<feature type="binding site" evidence="1">
    <location>
        <position position="21"/>
    </location>
    <ligand>
        <name>3-phosphoshikimate</name>
        <dbReference type="ChEBI" id="CHEBI:145989"/>
    </ligand>
</feature>
<feature type="binding site" evidence="1">
    <location>
        <position position="25"/>
    </location>
    <ligand>
        <name>3-phosphoshikimate</name>
        <dbReference type="ChEBI" id="CHEBI:145989"/>
    </ligand>
</feature>
<feature type="binding site" evidence="1">
    <location>
        <position position="92"/>
    </location>
    <ligand>
        <name>phosphoenolpyruvate</name>
        <dbReference type="ChEBI" id="CHEBI:58702"/>
    </ligand>
</feature>
<feature type="binding site" evidence="1">
    <location>
        <position position="121"/>
    </location>
    <ligand>
        <name>phosphoenolpyruvate</name>
        <dbReference type="ChEBI" id="CHEBI:58702"/>
    </ligand>
</feature>
<feature type="binding site" evidence="1">
    <location>
        <position position="167"/>
    </location>
    <ligand>
        <name>3-phosphoshikimate</name>
        <dbReference type="ChEBI" id="CHEBI:145989"/>
    </ligand>
</feature>
<feature type="binding site" evidence="1">
    <location>
        <position position="168"/>
    </location>
    <ligand>
        <name>3-phosphoshikimate</name>
        <dbReference type="ChEBI" id="CHEBI:145989"/>
    </ligand>
</feature>
<feature type="binding site" evidence="1">
    <location>
        <position position="169"/>
    </location>
    <ligand>
        <name>3-phosphoshikimate</name>
        <dbReference type="ChEBI" id="CHEBI:145989"/>
    </ligand>
</feature>
<feature type="binding site" evidence="1">
    <location>
        <position position="169"/>
    </location>
    <ligand>
        <name>phosphoenolpyruvate</name>
        <dbReference type="ChEBI" id="CHEBI:58702"/>
    </ligand>
</feature>
<feature type="binding site" evidence="1">
    <location>
        <position position="195"/>
    </location>
    <ligand>
        <name>3-phosphoshikimate</name>
        <dbReference type="ChEBI" id="CHEBI:145989"/>
    </ligand>
</feature>
<feature type="binding site" evidence="1">
    <location>
        <position position="315"/>
    </location>
    <ligand>
        <name>3-phosphoshikimate</name>
        <dbReference type="ChEBI" id="CHEBI:145989"/>
    </ligand>
</feature>
<feature type="binding site" evidence="1">
    <location>
        <position position="342"/>
    </location>
    <ligand>
        <name>3-phosphoshikimate</name>
        <dbReference type="ChEBI" id="CHEBI:145989"/>
    </ligand>
</feature>
<feature type="binding site" evidence="1">
    <location>
        <position position="346"/>
    </location>
    <ligand>
        <name>phosphoenolpyruvate</name>
        <dbReference type="ChEBI" id="CHEBI:58702"/>
    </ligand>
</feature>
<feature type="binding site" evidence="1">
    <location>
        <position position="388"/>
    </location>
    <ligand>
        <name>phosphoenolpyruvate</name>
        <dbReference type="ChEBI" id="CHEBI:58702"/>
    </ligand>
</feature>
<comment type="function">
    <text evidence="1">Catalyzes the transfer of the enolpyruvyl moiety of phosphoenolpyruvate (PEP) to the 5-hydroxyl of shikimate-3-phosphate (S3P) to produce enolpyruvyl shikimate-3-phosphate and inorganic phosphate.</text>
</comment>
<comment type="catalytic activity">
    <reaction evidence="1">
        <text>3-phosphoshikimate + phosphoenolpyruvate = 5-O-(1-carboxyvinyl)-3-phosphoshikimate + phosphate</text>
        <dbReference type="Rhea" id="RHEA:21256"/>
        <dbReference type="ChEBI" id="CHEBI:43474"/>
        <dbReference type="ChEBI" id="CHEBI:57701"/>
        <dbReference type="ChEBI" id="CHEBI:58702"/>
        <dbReference type="ChEBI" id="CHEBI:145989"/>
        <dbReference type="EC" id="2.5.1.19"/>
    </reaction>
    <physiologicalReaction direction="left-to-right" evidence="1">
        <dbReference type="Rhea" id="RHEA:21257"/>
    </physiologicalReaction>
</comment>
<comment type="pathway">
    <text evidence="1">Metabolic intermediate biosynthesis; chorismate biosynthesis.</text>
</comment>
<comment type="subunit">
    <text evidence="1">Monomer.</text>
</comment>
<comment type="subcellular location">
    <subcellularLocation>
        <location evidence="1">Cytoplasm</location>
    </subcellularLocation>
</comment>
<comment type="similarity">
    <text evidence="1">Belongs to the EPSP synthase family.</text>
</comment>
<accession>A6UTB9</accession>
<reference key="1">
    <citation type="submission" date="2007-06" db="EMBL/GenBank/DDBJ databases">
        <title>Complete sequence of Methanococcus aeolicus Nankai-3.</title>
        <authorList>
            <consortium name="US DOE Joint Genome Institute"/>
            <person name="Copeland A."/>
            <person name="Lucas S."/>
            <person name="Lapidus A."/>
            <person name="Barry K."/>
            <person name="Glavina del Rio T."/>
            <person name="Dalin E."/>
            <person name="Tice H."/>
            <person name="Pitluck S."/>
            <person name="Chain P."/>
            <person name="Malfatti S."/>
            <person name="Shin M."/>
            <person name="Vergez L."/>
            <person name="Schmutz J."/>
            <person name="Larimer F."/>
            <person name="Land M."/>
            <person name="Hauser L."/>
            <person name="Kyrpides N."/>
            <person name="Lykidis A."/>
            <person name="Sieprawska-Lupa M."/>
            <person name="Whitman W.B."/>
            <person name="Richardson P."/>
        </authorList>
    </citation>
    <scope>NUCLEOTIDE SEQUENCE [LARGE SCALE GENOMIC DNA]</scope>
    <source>
        <strain>ATCC BAA-1280 / DSM 17508 / OCM 812 / Nankai-3</strain>
    </source>
</reference>
<organism>
    <name type="scientific">Methanococcus aeolicus (strain ATCC BAA-1280 / DSM 17508 / OCM 812 / Nankai-3)</name>
    <dbReference type="NCBI Taxonomy" id="419665"/>
    <lineage>
        <taxon>Archaea</taxon>
        <taxon>Methanobacteriati</taxon>
        <taxon>Methanobacteriota</taxon>
        <taxon>Methanomada group</taxon>
        <taxon>Methanococci</taxon>
        <taxon>Methanococcales</taxon>
        <taxon>Methanococcaceae</taxon>
        <taxon>Methanococcus</taxon>
    </lineage>
</organism>
<dbReference type="EC" id="2.5.1.19" evidence="1"/>
<dbReference type="EMBL" id="CP000743">
    <property type="protein sequence ID" value="ABR55741.1"/>
    <property type="molecule type" value="Genomic_DNA"/>
</dbReference>
<dbReference type="RefSeq" id="WP_011972873.1">
    <property type="nucleotide sequence ID" value="NC_009635.1"/>
</dbReference>
<dbReference type="SMR" id="A6UTB9"/>
<dbReference type="STRING" id="419665.Maeo_0149"/>
<dbReference type="GeneID" id="5327505"/>
<dbReference type="KEGG" id="mae:Maeo_0149"/>
<dbReference type="eggNOG" id="arCOG04134">
    <property type="taxonomic scope" value="Archaea"/>
</dbReference>
<dbReference type="HOGENOM" id="CLU_024321_0_0_2"/>
<dbReference type="OrthoDB" id="43788at2157"/>
<dbReference type="UniPathway" id="UPA00053"/>
<dbReference type="Proteomes" id="UP000001106">
    <property type="component" value="Chromosome"/>
</dbReference>
<dbReference type="GO" id="GO:0005737">
    <property type="term" value="C:cytoplasm"/>
    <property type="evidence" value="ECO:0007669"/>
    <property type="project" value="UniProtKB-SubCell"/>
</dbReference>
<dbReference type="GO" id="GO:0003866">
    <property type="term" value="F:3-phosphoshikimate 1-carboxyvinyltransferase activity"/>
    <property type="evidence" value="ECO:0007669"/>
    <property type="project" value="UniProtKB-UniRule"/>
</dbReference>
<dbReference type="GO" id="GO:0008652">
    <property type="term" value="P:amino acid biosynthetic process"/>
    <property type="evidence" value="ECO:0007669"/>
    <property type="project" value="UniProtKB-KW"/>
</dbReference>
<dbReference type="GO" id="GO:0009073">
    <property type="term" value="P:aromatic amino acid family biosynthetic process"/>
    <property type="evidence" value="ECO:0007669"/>
    <property type="project" value="UniProtKB-KW"/>
</dbReference>
<dbReference type="GO" id="GO:0009423">
    <property type="term" value="P:chorismate biosynthetic process"/>
    <property type="evidence" value="ECO:0007669"/>
    <property type="project" value="UniProtKB-UniRule"/>
</dbReference>
<dbReference type="CDD" id="cd01556">
    <property type="entry name" value="EPSP_synthase"/>
    <property type="match status" value="1"/>
</dbReference>
<dbReference type="FunFam" id="3.65.10.10:FF:000012">
    <property type="entry name" value="Pentafunctional AROM polypeptide"/>
    <property type="match status" value="1"/>
</dbReference>
<dbReference type="Gene3D" id="3.65.10.10">
    <property type="entry name" value="Enolpyruvate transferase domain"/>
    <property type="match status" value="2"/>
</dbReference>
<dbReference type="HAMAP" id="MF_00210">
    <property type="entry name" value="EPSP_synth"/>
    <property type="match status" value="1"/>
</dbReference>
<dbReference type="InterPro" id="IPR001986">
    <property type="entry name" value="Enolpyruvate_Tfrase_dom"/>
</dbReference>
<dbReference type="InterPro" id="IPR036968">
    <property type="entry name" value="Enolpyruvate_Tfrase_sf"/>
</dbReference>
<dbReference type="InterPro" id="IPR006264">
    <property type="entry name" value="EPSP_synthase"/>
</dbReference>
<dbReference type="InterPro" id="IPR023193">
    <property type="entry name" value="EPSP_synthase_CS"/>
</dbReference>
<dbReference type="InterPro" id="IPR013792">
    <property type="entry name" value="RNA3'P_cycl/enolpyr_Trfase_a/b"/>
</dbReference>
<dbReference type="NCBIfam" id="TIGR01356">
    <property type="entry name" value="aroA"/>
    <property type="match status" value="1"/>
</dbReference>
<dbReference type="PANTHER" id="PTHR21090">
    <property type="entry name" value="AROM/DEHYDROQUINATE SYNTHASE"/>
    <property type="match status" value="1"/>
</dbReference>
<dbReference type="PANTHER" id="PTHR21090:SF5">
    <property type="entry name" value="PENTAFUNCTIONAL AROM POLYPEPTIDE"/>
    <property type="match status" value="1"/>
</dbReference>
<dbReference type="Pfam" id="PF00275">
    <property type="entry name" value="EPSP_synthase"/>
    <property type="match status" value="1"/>
</dbReference>
<dbReference type="PIRSF" id="PIRSF000505">
    <property type="entry name" value="EPSPS"/>
    <property type="match status" value="1"/>
</dbReference>
<dbReference type="SUPFAM" id="SSF55205">
    <property type="entry name" value="EPT/RTPC-like"/>
    <property type="match status" value="1"/>
</dbReference>
<dbReference type="PROSITE" id="PS00104">
    <property type="entry name" value="EPSP_SYNTHASE_1"/>
    <property type="match status" value="1"/>
</dbReference>
<dbReference type="PROSITE" id="PS00885">
    <property type="entry name" value="EPSP_SYNTHASE_2"/>
    <property type="match status" value="1"/>
</dbReference>
<sequence>MIIIEKTEQIKGTINAPPSKSYTHRAVICASLADGTSEIISPLNSADCLSSVHGAMMLGAEIDATDKNKWVVVGNNNSPKTPNNVVDIGNSGTTLRILTGIASQIPEGYAILTGDSSIITRPMQPLLDALNQLGIRAFSSKTDGTAPIIVEHGEIKNNVVKIRGDMSSQFITSLMMTMPFSKMDSTIELTTPLKSAPYLDITIDVLDKFGVKIEKVKNKNKLTKFIIKGNQKYKPYSYTVEGDCSSASYFIAAGVLMNSDITINNIFKNSKQGDREIVNIVKKMGAPIIEEEDKIIIKGPYKLKGIDIDVKDTPDLVPTIAILGCFAEGTTTIYNGEHVRLKECDRLMACAKELTKMGAKITEKPDGLIIEGVGKLNGAEMETYHDHRLVMAFTVAGMMAEGKTIIKGEDAVKISFPNFVEAIKSIGANITIK</sequence>
<name>AROA_META3</name>
<proteinExistence type="inferred from homology"/>
<gene>
    <name evidence="1" type="primary">aroA</name>
    <name type="ordered locus">Maeo_0149</name>
</gene>
<protein>
    <recommendedName>
        <fullName evidence="1">3-phosphoshikimate 1-carboxyvinyltransferase</fullName>
        <ecNumber evidence="1">2.5.1.19</ecNumber>
    </recommendedName>
    <alternativeName>
        <fullName evidence="1">5-enolpyruvylshikimate-3-phosphate synthase</fullName>
        <shortName evidence="1">EPSP synthase</shortName>
        <shortName evidence="1">EPSPS</shortName>
    </alternativeName>
</protein>
<evidence type="ECO:0000255" key="1">
    <source>
        <dbReference type="HAMAP-Rule" id="MF_00210"/>
    </source>
</evidence>
<keyword id="KW-0028">Amino-acid biosynthesis</keyword>
<keyword id="KW-0057">Aromatic amino acid biosynthesis</keyword>
<keyword id="KW-0963">Cytoplasm</keyword>
<keyword id="KW-0808">Transferase</keyword>